<proteinExistence type="inferred from homology"/>
<accession>B8J7G1</accession>
<organism>
    <name type="scientific">Anaeromyxobacter dehalogenans (strain 2CP-1 / ATCC BAA-258)</name>
    <dbReference type="NCBI Taxonomy" id="455488"/>
    <lineage>
        <taxon>Bacteria</taxon>
        <taxon>Pseudomonadati</taxon>
        <taxon>Myxococcota</taxon>
        <taxon>Myxococcia</taxon>
        <taxon>Myxococcales</taxon>
        <taxon>Cystobacterineae</taxon>
        <taxon>Anaeromyxobacteraceae</taxon>
        <taxon>Anaeromyxobacter</taxon>
    </lineage>
</organism>
<dbReference type="EC" id="4.1.1.32" evidence="1"/>
<dbReference type="EMBL" id="CP001359">
    <property type="protein sequence ID" value="ACL67141.1"/>
    <property type="molecule type" value="Genomic_DNA"/>
</dbReference>
<dbReference type="RefSeq" id="WP_015934890.1">
    <property type="nucleotide sequence ID" value="NC_011891.1"/>
</dbReference>
<dbReference type="SMR" id="B8J7G1"/>
<dbReference type="KEGG" id="acp:A2cp1_3817"/>
<dbReference type="HOGENOM" id="CLU_028872_1_1_7"/>
<dbReference type="UniPathway" id="UPA00138"/>
<dbReference type="Proteomes" id="UP000007089">
    <property type="component" value="Chromosome"/>
</dbReference>
<dbReference type="GO" id="GO:0005829">
    <property type="term" value="C:cytosol"/>
    <property type="evidence" value="ECO:0007669"/>
    <property type="project" value="TreeGrafter"/>
</dbReference>
<dbReference type="GO" id="GO:0005525">
    <property type="term" value="F:GTP binding"/>
    <property type="evidence" value="ECO:0007669"/>
    <property type="project" value="UniProtKB-UniRule"/>
</dbReference>
<dbReference type="GO" id="GO:0030145">
    <property type="term" value="F:manganese ion binding"/>
    <property type="evidence" value="ECO:0007669"/>
    <property type="project" value="UniProtKB-UniRule"/>
</dbReference>
<dbReference type="GO" id="GO:0004613">
    <property type="term" value="F:phosphoenolpyruvate carboxykinase (GTP) activity"/>
    <property type="evidence" value="ECO:0007669"/>
    <property type="project" value="UniProtKB-UniRule"/>
</dbReference>
<dbReference type="GO" id="GO:0071333">
    <property type="term" value="P:cellular response to glucose stimulus"/>
    <property type="evidence" value="ECO:0007669"/>
    <property type="project" value="TreeGrafter"/>
</dbReference>
<dbReference type="GO" id="GO:0006094">
    <property type="term" value="P:gluconeogenesis"/>
    <property type="evidence" value="ECO:0007669"/>
    <property type="project" value="UniProtKB-UniRule"/>
</dbReference>
<dbReference type="GO" id="GO:0046327">
    <property type="term" value="P:glycerol biosynthetic process from pyruvate"/>
    <property type="evidence" value="ECO:0007669"/>
    <property type="project" value="TreeGrafter"/>
</dbReference>
<dbReference type="GO" id="GO:0006107">
    <property type="term" value="P:oxaloacetate metabolic process"/>
    <property type="evidence" value="ECO:0007669"/>
    <property type="project" value="TreeGrafter"/>
</dbReference>
<dbReference type="GO" id="GO:0019543">
    <property type="term" value="P:propionate catabolic process"/>
    <property type="evidence" value="ECO:0007669"/>
    <property type="project" value="TreeGrafter"/>
</dbReference>
<dbReference type="GO" id="GO:0033993">
    <property type="term" value="P:response to lipid"/>
    <property type="evidence" value="ECO:0007669"/>
    <property type="project" value="TreeGrafter"/>
</dbReference>
<dbReference type="GO" id="GO:0042594">
    <property type="term" value="P:response to starvation"/>
    <property type="evidence" value="ECO:0007669"/>
    <property type="project" value="TreeGrafter"/>
</dbReference>
<dbReference type="CDD" id="cd00819">
    <property type="entry name" value="PEPCK_GTP"/>
    <property type="match status" value="1"/>
</dbReference>
<dbReference type="FunFam" id="3.40.449.10:FF:000005">
    <property type="entry name" value="Phosphoenolpyruvate carboxykinase [GTP]"/>
    <property type="match status" value="1"/>
</dbReference>
<dbReference type="Gene3D" id="3.90.228.20">
    <property type="match status" value="1"/>
</dbReference>
<dbReference type="Gene3D" id="3.40.449.10">
    <property type="entry name" value="Phosphoenolpyruvate Carboxykinase, domain 1"/>
    <property type="match status" value="1"/>
</dbReference>
<dbReference type="Gene3D" id="2.170.8.10">
    <property type="entry name" value="Phosphoenolpyruvate Carboxykinase, domain 2"/>
    <property type="match status" value="1"/>
</dbReference>
<dbReference type="HAMAP" id="MF_00452">
    <property type="entry name" value="PEPCK_GTP"/>
    <property type="match status" value="1"/>
</dbReference>
<dbReference type="InterPro" id="IPR018091">
    <property type="entry name" value="PEP_carboxykin_GTP_CS"/>
</dbReference>
<dbReference type="InterPro" id="IPR013035">
    <property type="entry name" value="PEP_carboxykinase_C"/>
</dbReference>
<dbReference type="InterPro" id="IPR008209">
    <property type="entry name" value="PEP_carboxykinase_GTP"/>
</dbReference>
<dbReference type="InterPro" id="IPR035077">
    <property type="entry name" value="PEP_carboxykinase_GTP_C"/>
</dbReference>
<dbReference type="InterPro" id="IPR035078">
    <property type="entry name" value="PEP_carboxykinase_GTP_N"/>
</dbReference>
<dbReference type="InterPro" id="IPR008210">
    <property type="entry name" value="PEP_carboxykinase_N"/>
</dbReference>
<dbReference type="NCBIfam" id="NF003253">
    <property type="entry name" value="PRK04210.1"/>
    <property type="match status" value="1"/>
</dbReference>
<dbReference type="PANTHER" id="PTHR11561">
    <property type="entry name" value="PHOSPHOENOLPYRUVATE CARBOXYKINASE"/>
    <property type="match status" value="1"/>
</dbReference>
<dbReference type="PANTHER" id="PTHR11561:SF0">
    <property type="entry name" value="PHOSPHOENOLPYRUVATE CARBOXYKINASE [GTP]-RELATED"/>
    <property type="match status" value="1"/>
</dbReference>
<dbReference type="Pfam" id="PF00821">
    <property type="entry name" value="PEPCK_GTP"/>
    <property type="match status" value="1"/>
</dbReference>
<dbReference type="Pfam" id="PF17297">
    <property type="entry name" value="PEPCK_N"/>
    <property type="match status" value="1"/>
</dbReference>
<dbReference type="PIRSF" id="PIRSF001348">
    <property type="entry name" value="PEP_carboxykinase_GTP"/>
    <property type="match status" value="1"/>
</dbReference>
<dbReference type="SUPFAM" id="SSF68923">
    <property type="entry name" value="PEP carboxykinase N-terminal domain"/>
    <property type="match status" value="1"/>
</dbReference>
<dbReference type="SUPFAM" id="SSF53795">
    <property type="entry name" value="PEP carboxykinase-like"/>
    <property type="match status" value="1"/>
</dbReference>
<dbReference type="PROSITE" id="PS00505">
    <property type="entry name" value="PEPCK_GTP"/>
    <property type="match status" value="1"/>
</dbReference>
<name>PCKG_ANAD2</name>
<feature type="chain" id="PRO_1000192343" description="Phosphoenolpyruvate carboxykinase [GTP]">
    <location>
        <begin position="1"/>
        <end position="596"/>
    </location>
</feature>
<feature type="region of interest" description="Disordered" evidence="2">
    <location>
        <begin position="362"/>
        <end position="388"/>
    </location>
</feature>
<feature type="active site" evidence="1">
    <location>
        <position position="258"/>
    </location>
</feature>
<feature type="binding site" evidence="1">
    <location>
        <position position="77"/>
    </location>
    <ligand>
        <name>substrate</name>
    </ligand>
</feature>
<feature type="binding site" evidence="1">
    <location>
        <begin position="205"/>
        <end position="207"/>
    </location>
    <ligand>
        <name>substrate</name>
    </ligand>
</feature>
<feature type="binding site" evidence="1">
    <location>
        <position position="214"/>
    </location>
    <ligand>
        <name>Mn(2+)</name>
        <dbReference type="ChEBI" id="CHEBI:29035"/>
    </ligand>
</feature>
<feature type="binding site" evidence="1">
    <location>
        <position position="234"/>
    </location>
    <ligand>
        <name>Mn(2+)</name>
        <dbReference type="ChEBI" id="CHEBI:29035"/>
    </ligand>
</feature>
<feature type="binding site" evidence="1">
    <location>
        <position position="256"/>
    </location>
    <ligand>
        <name>substrate</name>
    </ligand>
</feature>
<feature type="binding site" evidence="1">
    <location>
        <begin position="257"/>
        <end position="262"/>
    </location>
    <ligand>
        <name>GTP</name>
        <dbReference type="ChEBI" id="CHEBI:37565"/>
    </ligand>
</feature>
<feature type="binding site" evidence="1">
    <location>
        <position position="283"/>
    </location>
    <ligand>
        <name>Mn(2+)</name>
        <dbReference type="ChEBI" id="CHEBI:29035"/>
    </ligand>
</feature>
<feature type="binding site" evidence="1">
    <location>
        <begin position="373"/>
        <end position="375"/>
    </location>
    <ligand>
        <name>substrate</name>
    </ligand>
</feature>
<feature type="binding site" evidence="1">
    <location>
        <position position="375"/>
    </location>
    <ligand>
        <name>GTP</name>
        <dbReference type="ChEBI" id="CHEBI:37565"/>
    </ligand>
</feature>
<feature type="binding site" evidence="1">
    <location>
        <position position="406"/>
    </location>
    <ligand>
        <name>GTP</name>
        <dbReference type="ChEBI" id="CHEBI:37565"/>
    </ligand>
</feature>
<feature type="binding site" evidence="1">
    <location>
        <begin position="499"/>
        <end position="502"/>
    </location>
    <ligand>
        <name>GTP</name>
        <dbReference type="ChEBI" id="CHEBI:37565"/>
    </ligand>
</feature>
<sequence>MSTSPAARPTSNAHLLGWVDEMAKLCKPDRVYWCDGSEAEKKRLTDDAVAAKVLIPLDQQKWPGCHYHHSNSSDVARVEHLTFICTPTKEQAGPTNNWMEPKEAYRKLGAIFDGSMKGRTMYVVPYVMGPSTSPFAKVGIEITDSVYVALNMGIMARMGKVALDRLGDSDEFNRGLHSVADCNPERRFICHFPQDNTIWSVGSGYGGNALLGKKCLALRIASYLAKNEGWLAEHMLILEAESPTGEKQYVAAAFPSACGKTNFAMMIPPAAFPGWKIRTVGDDISWMRVGEDGRLWAVNPENGYFGVAPGTNRKTNPNAMDSVRKDTIFTNVARTPDGDIWWEGMDHEAPAELIDWKGQPWKKGSTEKAAHPNSRFTAPAKNNPAISPLVDDPKGVPISAIIFGGRRSTTVPLVLEAFNWTHGVYLGSTMGSETTAAATGQVGVVRRDPMAMLPFIGYDCGSYLQHWLDMQSRIPNPPKIFLVNWFRKSAEGKFLWPGYGDNMRVLKWMLDRAAGRAPAKETLLGYTPGDSGLDLHGLDVSKDAIAAATQIDLGEWEQELESQSEWFEKLGKTLPRPLALQRELLLERVRAARKVK</sequence>
<comment type="function">
    <text evidence="1">Catalyzes the conversion of oxaloacetate (OAA) to phosphoenolpyruvate (PEP), the rate-limiting step in the metabolic pathway that produces glucose from lactate and other precursors derived from the citric acid cycle.</text>
</comment>
<comment type="catalytic activity">
    <reaction evidence="1">
        <text>oxaloacetate + GTP = phosphoenolpyruvate + GDP + CO2</text>
        <dbReference type="Rhea" id="RHEA:10388"/>
        <dbReference type="ChEBI" id="CHEBI:16452"/>
        <dbReference type="ChEBI" id="CHEBI:16526"/>
        <dbReference type="ChEBI" id="CHEBI:37565"/>
        <dbReference type="ChEBI" id="CHEBI:58189"/>
        <dbReference type="ChEBI" id="CHEBI:58702"/>
        <dbReference type="EC" id="4.1.1.32"/>
    </reaction>
</comment>
<comment type="cofactor">
    <cofactor evidence="1">
        <name>Mn(2+)</name>
        <dbReference type="ChEBI" id="CHEBI:29035"/>
    </cofactor>
    <text evidence="1">Binds 1 Mn(2+) ion per subunit.</text>
</comment>
<comment type="pathway">
    <text evidence="1">Carbohydrate biosynthesis; gluconeogenesis.</text>
</comment>
<comment type="subunit">
    <text evidence="1">Monomer.</text>
</comment>
<comment type="subcellular location">
    <subcellularLocation>
        <location evidence="1">Cytoplasm</location>
    </subcellularLocation>
</comment>
<comment type="similarity">
    <text evidence="1">Belongs to the phosphoenolpyruvate carboxykinase [GTP] family.</text>
</comment>
<protein>
    <recommendedName>
        <fullName evidence="1">Phosphoenolpyruvate carboxykinase [GTP]</fullName>
        <shortName evidence="1">PEP carboxykinase</shortName>
        <shortName evidence="1">PEPCK</shortName>
        <ecNumber evidence="1">4.1.1.32</ecNumber>
    </recommendedName>
</protein>
<evidence type="ECO:0000255" key="1">
    <source>
        <dbReference type="HAMAP-Rule" id="MF_00452"/>
    </source>
</evidence>
<evidence type="ECO:0000256" key="2">
    <source>
        <dbReference type="SAM" id="MobiDB-lite"/>
    </source>
</evidence>
<gene>
    <name evidence="1" type="primary">pckG</name>
    <name type="ordered locus">A2cp1_3817</name>
</gene>
<reference key="1">
    <citation type="submission" date="2009-01" db="EMBL/GenBank/DDBJ databases">
        <title>Complete sequence of Anaeromyxobacter dehalogenans 2CP-1.</title>
        <authorList>
            <person name="Lucas S."/>
            <person name="Copeland A."/>
            <person name="Lapidus A."/>
            <person name="Glavina del Rio T."/>
            <person name="Dalin E."/>
            <person name="Tice H."/>
            <person name="Bruce D."/>
            <person name="Goodwin L."/>
            <person name="Pitluck S."/>
            <person name="Saunders E."/>
            <person name="Brettin T."/>
            <person name="Detter J.C."/>
            <person name="Han C."/>
            <person name="Larimer F."/>
            <person name="Land M."/>
            <person name="Hauser L."/>
            <person name="Kyrpides N."/>
            <person name="Ovchinnikova G."/>
            <person name="Beliaev A.S."/>
            <person name="Richardson P."/>
        </authorList>
    </citation>
    <scope>NUCLEOTIDE SEQUENCE [LARGE SCALE GENOMIC DNA]</scope>
    <source>
        <strain>2CP-1 / ATCC BAA-258</strain>
    </source>
</reference>
<keyword id="KW-0963">Cytoplasm</keyword>
<keyword id="KW-0210">Decarboxylase</keyword>
<keyword id="KW-0312">Gluconeogenesis</keyword>
<keyword id="KW-0342">GTP-binding</keyword>
<keyword id="KW-0456">Lyase</keyword>
<keyword id="KW-0464">Manganese</keyword>
<keyword id="KW-0479">Metal-binding</keyword>
<keyword id="KW-0547">Nucleotide-binding</keyword>